<reference key="1">
    <citation type="submission" date="2007-10" db="EMBL/GenBank/DDBJ databases">
        <title>Complete sequence of Methanococcus maripaludis C6.</title>
        <authorList>
            <consortium name="US DOE Joint Genome Institute"/>
            <person name="Copeland A."/>
            <person name="Lucas S."/>
            <person name="Lapidus A."/>
            <person name="Barry K."/>
            <person name="Glavina del Rio T."/>
            <person name="Dalin E."/>
            <person name="Tice H."/>
            <person name="Pitluck S."/>
            <person name="Clum A."/>
            <person name="Schmutz J."/>
            <person name="Larimer F."/>
            <person name="Land M."/>
            <person name="Hauser L."/>
            <person name="Kyrpides N."/>
            <person name="Mikhailova N."/>
            <person name="Sieprawska-Lupa M."/>
            <person name="Whitman W.B."/>
            <person name="Richardson P."/>
        </authorList>
    </citation>
    <scope>NUCLEOTIDE SEQUENCE [LARGE SCALE GENOMIC DNA]</scope>
    <source>
        <strain>C6 / ATCC BAA-1332</strain>
    </source>
</reference>
<evidence type="ECO:0000255" key="1">
    <source>
        <dbReference type="HAMAP-Rule" id="MF_00531"/>
    </source>
</evidence>
<evidence type="ECO:0000256" key="2">
    <source>
        <dbReference type="SAM" id="MobiDB-lite"/>
    </source>
</evidence>
<evidence type="ECO:0000305" key="3"/>
<accession>A9A9B4</accession>
<sequence>MARQKKYSGKGGARKKNKQKQSVAPRRRVEFRYKGFTLEELQEMPIKKFMEIVPSRQRRTMLRGITPNQRKLVMKIKKARRLTNRGKEPRVIRTHCRDFVITPEMIGLTFGIYNGKEFKDVTLVEETVGRFLGEMAPTRAVVQHGSPGMGATRGSMFVPIK</sequence>
<comment type="function">
    <text evidence="1">Protein S19 forms a complex with S13 that binds strongly to the 16S ribosomal RNA.</text>
</comment>
<comment type="similarity">
    <text evidence="1">Belongs to the universal ribosomal protein uS19 family.</text>
</comment>
<gene>
    <name evidence="1" type="primary">rps19</name>
    <name type="ordered locus">MmarC6_1123</name>
</gene>
<protein>
    <recommendedName>
        <fullName evidence="1">Small ribosomal subunit protein uS19</fullName>
    </recommendedName>
    <alternativeName>
        <fullName evidence="3">30S ribosomal protein S19</fullName>
    </alternativeName>
</protein>
<feature type="chain" id="PRO_0000354315" description="Small ribosomal subunit protein uS19">
    <location>
        <begin position="1"/>
        <end position="161"/>
    </location>
</feature>
<feature type="region of interest" description="Disordered" evidence="2">
    <location>
        <begin position="1"/>
        <end position="26"/>
    </location>
</feature>
<feature type="compositionally biased region" description="Basic residues" evidence="2">
    <location>
        <begin position="1"/>
        <end position="19"/>
    </location>
</feature>
<proteinExistence type="inferred from homology"/>
<name>RS19_METM6</name>
<keyword id="KW-0687">Ribonucleoprotein</keyword>
<keyword id="KW-0689">Ribosomal protein</keyword>
<keyword id="KW-0694">RNA-binding</keyword>
<keyword id="KW-0699">rRNA-binding</keyword>
<dbReference type="EMBL" id="CP000867">
    <property type="protein sequence ID" value="ABX01937.1"/>
    <property type="molecule type" value="Genomic_DNA"/>
</dbReference>
<dbReference type="SMR" id="A9A9B4"/>
<dbReference type="STRING" id="444158.MmarC6_1123"/>
<dbReference type="KEGG" id="mmx:MmarC6_1123"/>
<dbReference type="eggNOG" id="arCOG04099">
    <property type="taxonomic scope" value="Archaea"/>
</dbReference>
<dbReference type="HOGENOM" id="CLU_097347_1_1_2"/>
<dbReference type="OrthoDB" id="30559at2157"/>
<dbReference type="PhylomeDB" id="A9A9B4"/>
<dbReference type="GO" id="GO:0022627">
    <property type="term" value="C:cytosolic small ribosomal subunit"/>
    <property type="evidence" value="ECO:0007669"/>
    <property type="project" value="TreeGrafter"/>
</dbReference>
<dbReference type="GO" id="GO:0019843">
    <property type="term" value="F:rRNA binding"/>
    <property type="evidence" value="ECO:0007669"/>
    <property type="project" value="UniProtKB-UniRule"/>
</dbReference>
<dbReference type="GO" id="GO:0003735">
    <property type="term" value="F:structural constituent of ribosome"/>
    <property type="evidence" value="ECO:0007669"/>
    <property type="project" value="InterPro"/>
</dbReference>
<dbReference type="GO" id="GO:0000028">
    <property type="term" value="P:ribosomal small subunit assembly"/>
    <property type="evidence" value="ECO:0007669"/>
    <property type="project" value="TreeGrafter"/>
</dbReference>
<dbReference type="GO" id="GO:0006412">
    <property type="term" value="P:translation"/>
    <property type="evidence" value="ECO:0007669"/>
    <property type="project" value="UniProtKB-UniRule"/>
</dbReference>
<dbReference type="FunFam" id="3.30.860.10:FF:000002">
    <property type="entry name" value="40S ribosomal protein S15"/>
    <property type="match status" value="1"/>
</dbReference>
<dbReference type="Gene3D" id="3.30.860.10">
    <property type="entry name" value="30s Ribosomal Protein S19, Chain A"/>
    <property type="match status" value="1"/>
</dbReference>
<dbReference type="HAMAP" id="MF_00531">
    <property type="entry name" value="Ribosomal_uS19"/>
    <property type="match status" value="1"/>
</dbReference>
<dbReference type="InterPro" id="IPR002222">
    <property type="entry name" value="Ribosomal_uS19"/>
</dbReference>
<dbReference type="InterPro" id="IPR020934">
    <property type="entry name" value="Ribosomal_uS19_CS"/>
</dbReference>
<dbReference type="InterPro" id="IPR005713">
    <property type="entry name" value="Ribosomal_uS19_euk/arc"/>
</dbReference>
<dbReference type="InterPro" id="IPR023575">
    <property type="entry name" value="Ribosomal_uS19_SF"/>
</dbReference>
<dbReference type="NCBIfam" id="NF003121">
    <property type="entry name" value="PRK04038.1"/>
    <property type="match status" value="1"/>
</dbReference>
<dbReference type="NCBIfam" id="TIGR01025">
    <property type="entry name" value="uS19_arch"/>
    <property type="match status" value="1"/>
</dbReference>
<dbReference type="PANTHER" id="PTHR11880">
    <property type="entry name" value="RIBOSOMAL PROTEIN S19P FAMILY MEMBER"/>
    <property type="match status" value="1"/>
</dbReference>
<dbReference type="PANTHER" id="PTHR11880:SF2">
    <property type="entry name" value="SMALL RIBOSOMAL SUBUNIT PROTEIN US19"/>
    <property type="match status" value="1"/>
</dbReference>
<dbReference type="Pfam" id="PF00203">
    <property type="entry name" value="Ribosomal_S19"/>
    <property type="match status" value="1"/>
</dbReference>
<dbReference type="PIRSF" id="PIRSF002144">
    <property type="entry name" value="Ribosomal_S19"/>
    <property type="match status" value="1"/>
</dbReference>
<dbReference type="PRINTS" id="PR00975">
    <property type="entry name" value="RIBOSOMALS19"/>
</dbReference>
<dbReference type="SUPFAM" id="SSF54570">
    <property type="entry name" value="Ribosomal protein S19"/>
    <property type="match status" value="1"/>
</dbReference>
<dbReference type="PROSITE" id="PS00323">
    <property type="entry name" value="RIBOSOMAL_S19"/>
    <property type="match status" value="1"/>
</dbReference>
<organism>
    <name type="scientific">Methanococcus maripaludis (strain C6 / ATCC BAA-1332)</name>
    <dbReference type="NCBI Taxonomy" id="444158"/>
    <lineage>
        <taxon>Archaea</taxon>
        <taxon>Methanobacteriati</taxon>
        <taxon>Methanobacteriota</taxon>
        <taxon>Methanomada group</taxon>
        <taxon>Methanococci</taxon>
        <taxon>Methanococcales</taxon>
        <taxon>Methanococcaceae</taxon>
        <taxon>Methanococcus</taxon>
    </lineage>
</organism>